<comment type="function">
    <text evidence="1">Catalyzes the condensation reaction of fatty acid synthesis by the addition to an acyl acceptor of two carbons from malonyl-ACP. Catalyzes the first condensation reaction which initiates fatty acid synthesis and may therefore play a role in governing the total rate of fatty acid production. Possesses both acetoacetyl-ACP synthase and acetyl transacylase activities. Its substrate specificity determines the biosynthesis of branched-chain and/or straight-chain of fatty acids.</text>
</comment>
<comment type="catalytic activity">
    <reaction evidence="1">
        <text>malonyl-[ACP] + acetyl-CoA + H(+) = 3-oxobutanoyl-[ACP] + CO2 + CoA</text>
        <dbReference type="Rhea" id="RHEA:12080"/>
        <dbReference type="Rhea" id="RHEA-COMP:9623"/>
        <dbReference type="Rhea" id="RHEA-COMP:9625"/>
        <dbReference type="ChEBI" id="CHEBI:15378"/>
        <dbReference type="ChEBI" id="CHEBI:16526"/>
        <dbReference type="ChEBI" id="CHEBI:57287"/>
        <dbReference type="ChEBI" id="CHEBI:57288"/>
        <dbReference type="ChEBI" id="CHEBI:78449"/>
        <dbReference type="ChEBI" id="CHEBI:78450"/>
        <dbReference type="EC" id="2.3.1.180"/>
    </reaction>
</comment>
<comment type="pathway">
    <text evidence="1">Lipid metabolism; fatty acid biosynthesis.</text>
</comment>
<comment type="subunit">
    <text evidence="1">Homodimer.</text>
</comment>
<comment type="subcellular location">
    <subcellularLocation>
        <location evidence="1">Cytoplasm</location>
    </subcellularLocation>
</comment>
<comment type="domain">
    <text evidence="1">The last Arg residue of the ACP-binding site is essential for the weak association between ACP/AcpP and FabH.</text>
</comment>
<comment type="similarity">
    <text evidence="1">Belongs to the thiolase-like superfamily. FabH family.</text>
</comment>
<protein>
    <recommendedName>
        <fullName evidence="1">Beta-ketoacyl-[acyl-carrier-protein] synthase III</fullName>
        <shortName evidence="1">Beta-ketoacyl-ACP synthase III</shortName>
        <shortName evidence="1">KAS III</shortName>
        <ecNumber evidence="1">2.3.1.180</ecNumber>
    </recommendedName>
    <alternativeName>
        <fullName evidence="1">3-oxoacyl-[acyl-carrier-protein] synthase 3</fullName>
    </alternativeName>
    <alternativeName>
        <fullName evidence="1">3-oxoacyl-[acyl-carrier-protein] synthase III</fullName>
    </alternativeName>
</protein>
<name>FABH_CHLTR</name>
<proteinExistence type="inferred from homology"/>
<dbReference type="EC" id="2.3.1.180" evidence="1"/>
<dbReference type="EMBL" id="AE001273">
    <property type="protein sequence ID" value="AAC67832.1"/>
    <property type="molecule type" value="Genomic_DNA"/>
</dbReference>
<dbReference type="PIR" id="H71538">
    <property type="entry name" value="H71538"/>
</dbReference>
<dbReference type="RefSeq" id="NP_219744.1">
    <property type="nucleotide sequence ID" value="NC_000117.1"/>
</dbReference>
<dbReference type="RefSeq" id="WP_009871586.1">
    <property type="nucleotide sequence ID" value="NC_000117.1"/>
</dbReference>
<dbReference type="SMR" id="O84242"/>
<dbReference type="FunCoup" id="O84242">
    <property type="interactions" value="230"/>
</dbReference>
<dbReference type="STRING" id="272561.CT_239"/>
<dbReference type="EnsemblBacteria" id="AAC67832">
    <property type="protein sequence ID" value="AAC67832"/>
    <property type="gene ID" value="CT_239"/>
</dbReference>
<dbReference type="GeneID" id="884881"/>
<dbReference type="KEGG" id="ctr:CT_239"/>
<dbReference type="PATRIC" id="fig|272561.5.peg.256"/>
<dbReference type="HOGENOM" id="CLU_039592_3_1_0"/>
<dbReference type="InParanoid" id="O84242"/>
<dbReference type="OrthoDB" id="9815506at2"/>
<dbReference type="UniPathway" id="UPA00094"/>
<dbReference type="Proteomes" id="UP000000431">
    <property type="component" value="Chromosome"/>
</dbReference>
<dbReference type="GO" id="GO:0005737">
    <property type="term" value="C:cytoplasm"/>
    <property type="evidence" value="ECO:0007669"/>
    <property type="project" value="UniProtKB-SubCell"/>
</dbReference>
<dbReference type="GO" id="GO:0004315">
    <property type="term" value="F:3-oxoacyl-[acyl-carrier-protein] synthase activity"/>
    <property type="evidence" value="ECO:0007669"/>
    <property type="project" value="InterPro"/>
</dbReference>
<dbReference type="GO" id="GO:0033818">
    <property type="term" value="F:beta-ketoacyl-acyl-carrier-protein synthase III activity"/>
    <property type="evidence" value="ECO:0007669"/>
    <property type="project" value="UniProtKB-UniRule"/>
</dbReference>
<dbReference type="GO" id="GO:0006633">
    <property type="term" value="P:fatty acid biosynthetic process"/>
    <property type="evidence" value="ECO:0007669"/>
    <property type="project" value="UniProtKB-UniRule"/>
</dbReference>
<dbReference type="GO" id="GO:0044550">
    <property type="term" value="P:secondary metabolite biosynthetic process"/>
    <property type="evidence" value="ECO:0000318"/>
    <property type="project" value="GO_Central"/>
</dbReference>
<dbReference type="CDD" id="cd00830">
    <property type="entry name" value="KAS_III"/>
    <property type="match status" value="1"/>
</dbReference>
<dbReference type="FunFam" id="3.40.47.10:FF:000004">
    <property type="entry name" value="3-oxoacyl-[acyl-carrier-protein] synthase 3"/>
    <property type="match status" value="1"/>
</dbReference>
<dbReference type="Gene3D" id="3.40.47.10">
    <property type="match status" value="1"/>
</dbReference>
<dbReference type="HAMAP" id="MF_01815">
    <property type="entry name" value="FabH"/>
    <property type="match status" value="1"/>
</dbReference>
<dbReference type="InterPro" id="IPR013747">
    <property type="entry name" value="ACP_syn_III_C"/>
</dbReference>
<dbReference type="InterPro" id="IPR013751">
    <property type="entry name" value="ACP_syn_III_N"/>
</dbReference>
<dbReference type="InterPro" id="IPR004655">
    <property type="entry name" value="FabH"/>
</dbReference>
<dbReference type="InterPro" id="IPR016039">
    <property type="entry name" value="Thiolase-like"/>
</dbReference>
<dbReference type="NCBIfam" id="TIGR00747">
    <property type="entry name" value="fabH"/>
    <property type="match status" value="1"/>
</dbReference>
<dbReference type="NCBIfam" id="NF006829">
    <property type="entry name" value="PRK09352.1"/>
    <property type="match status" value="1"/>
</dbReference>
<dbReference type="PANTHER" id="PTHR34069">
    <property type="entry name" value="3-OXOACYL-[ACYL-CARRIER-PROTEIN] SYNTHASE 3"/>
    <property type="match status" value="1"/>
</dbReference>
<dbReference type="PANTHER" id="PTHR34069:SF2">
    <property type="entry name" value="BETA-KETOACYL-[ACYL-CARRIER-PROTEIN] SYNTHASE III"/>
    <property type="match status" value="1"/>
</dbReference>
<dbReference type="Pfam" id="PF08545">
    <property type="entry name" value="ACP_syn_III"/>
    <property type="match status" value="1"/>
</dbReference>
<dbReference type="Pfam" id="PF08541">
    <property type="entry name" value="ACP_syn_III_C"/>
    <property type="match status" value="1"/>
</dbReference>
<dbReference type="SUPFAM" id="SSF53901">
    <property type="entry name" value="Thiolase-like"/>
    <property type="match status" value="1"/>
</dbReference>
<keyword id="KW-0012">Acyltransferase</keyword>
<keyword id="KW-0963">Cytoplasm</keyword>
<keyword id="KW-0275">Fatty acid biosynthesis</keyword>
<keyword id="KW-0276">Fatty acid metabolism</keyword>
<keyword id="KW-0444">Lipid biosynthesis</keyword>
<keyword id="KW-0443">Lipid metabolism</keyword>
<keyword id="KW-0511">Multifunctional enzyme</keyword>
<keyword id="KW-1185">Reference proteome</keyword>
<keyword id="KW-0808">Transferase</keyword>
<sequence>MRASIWGTGSYLPKKILTNADLEKIVETSDEWISTRTGIKERRIASAEEFSSFMGAKAAEKAIEAAKISKSQVDCIVFSTAAPDYIFPSSAALAQAYLGIKEIPAFDCLAACTGFLYGLSIAKAYVESGMYQCVLVIAADKLSSFVNYQDRNTCVLFGDGGSACIVGHSRPGALEISKVNLGADGKQGDLLRLPAGGSRCPASQDTVQNHQHFITMEGKEVFKHAVRRMEFAAKTCITEAGLQEKDIDWLVPHQANERIIDAIAKRFAVKDSRVFKTLAKYGNTAASSVGIALDELLRTHDIHVAERLLLVAFGGGLSWGAVILQQV</sequence>
<organism>
    <name type="scientific">Chlamydia trachomatis serovar D (strain ATCC VR-885 / DSM 19411 / UW-3/Cx)</name>
    <dbReference type="NCBI Taxonomy" id="272561"/>
    <lineage>
        <taxon>Bacteria</taxon>
        <taxon>Pseudomonadati</taxon>
        <taxon>Chlamydiota</taxon>
        <taxon>Chlamydiia</taxon>
        <taxon>Chlamydiales</taxon>
        <taxon>Chlamydiaceae</taxon>
        <taxon>Chlamydia/Chlamydophila group</taxon>
        <taxon>Chlamydia</taxon>
    </lineage>
</organism>
<gene>
    <name evidence="1" type="primary">fabH</name>
    <name type="ordered locus">CT_239</name>
</gene>
<reference key="1">
    <citation type="journal article" date="1998" name="Science">
        <title>Genome sequence of an obligate intracellular pathogen of humans: Chlamydia trachomatis.</title>
        <authorList>
            <person name="Stephens R.S."/>
            <person name="Kalman S."/>
            <person name="Lammel C.J."/>
            <person name="Fan J."/>
            <person name="Marathe R."/>
            <person name="Aravind L."/>
            <person name="Mitchell W.P."/>
            <person name="Olinger L."/>
            <person name="Tatusov R.L."/>
            <person name="Zhao Q."/>
            <person name="Koonin E.V."/>
            <person name="Davis R.W."/>
        </authorList>
    </citation>
    <scope>NUCLEOTIDE SEQUENCE [LARGE SCALE GENOMIC DNA]</scope>
    <source>
        <strain>ATCC VR-885 / DSM 19411 / UW-3/Cx</strain>
    </source>
</reference>
<feature type="chain" id="PRO_0000110416" description="Beta-ketoacyl-[acyl-carrier-protein] synthase III">
    <location>
        <begin position="1"/>
        <end position="327"/>
    </location>
</feature>
<feature type="region of interest" description="ACP-binding" evidence="1">
    <location>
        <begin position="254"/>
        <end position="258"/>
    </location>
</feature>
<feature type="active site" evidence="1">
    <location>
        <position position="112"/>
    </location>
</feature>
<feature type="active site" evidence="1">
    <location>
        <position position="253"/>
    </location>
</feature>
<feature type="active site" evidence="1">
    <location>
        <position position="283"/>
    </location>
</feature>
<evidence type="ECO:0000255" key="1">
    <source>
        <dbReference type="HAMAP-Rule" id="MF_01815"/>
    </source>
</evidence>
<accession>O84242</accession>